<evidence type="ECO:0000250" key="1">
    <source>
        <dbReference type="UniProtKB" id="Q6NXT4"/>
    </source>
</evidence>
<evidence type="ECO:0000255" key="2"/>
<evidence type="ECO:0000256" key="3">
    <source>
        <dbReference type="SAM" id="MobiDB-lite"/>
    </source>
</evidence>
<evidence type="ECO:0000269" key="4">
    <source>
    </source>
</evidence>
<evidence type="ECO:0000305" key="5"/>
<evidence type="ECO:0000305" key="6">
    <source>
    </source>
</evidence>
<name>ZNT6_MOUSE</name>
<organism>
    <name type="scientific">Mus musculus</name>
    <name type="common">Mouse</name>
    <dbReference type="NCBI Taxonomy" id="10090"/>
    <lineage>
        <taxon>Eukaryota</taxon>
        <taxon>Metazoa</taxon>
        <taxon>Chordata</taxon>
        <taxon>Craniata</taxon>
        <taxon>Vertebrata</taxon>
        <taxon>Euteleostomi</taxon>
        <taxon>Mammalia</taxon>
        <taxon>Eutheria</taxon>
        <taxon>Euarchontoglires</taxon>
        <taxon>Glires</taxon>
        <taxon>Rodentia</taxon>
        <taxon>Myomorpha</taxon>
        <taxon>Muroidea</taxon>
        <taxon>Muridae</taxon>
        <taxon>Murinae</taxon>
        <taxon>Mus</taxon>
        <taxon>Mus</taxon>
    </lineage>
</organism>
<gene>
    <name type="primary">Slc30a6</name>
    <name type="synonym">Znt6</name>
</gene>
<protein>
    <recommendedName>
        <fullName>Zinc transporter 6</fullName>
        <shortName>ZnT-6</shortName>
    </recommendedName>
    <alternativeName>
        <fullName>Solute carrier family 30 member 6</fullName>
    </alternativeName>
</protein>
<feature type="chain" id="PRO_0000312574" description="Zinc transporter 6">
    <location>
        <begin position="1"/>
        <end position="460"/>
    </location>
</feature>
<feature type="topological domain" description="Cytoplasmic" evidence="2">
    <location>
        <begin position="1"/>
        <end position="33"/>
    </location>
</feature>
<feature type="transmembrane region" description="Helical" evidence="2">
    <location>
        <begin position="34"/>
        <end position="54"/>
    </location>
</feature>
<feature type="topological domain" description="Extracellular" evidence="2">
    <location>
        <begin position="55"/>
        <end position="64"/>
    </location>
</feature>
<feature type="transmembrane region" description="Helical" evidence="2">
    <location>
        <begin position="65"/>
        <end position="85"/>
    </location>
</feature>
<feature type="topological domain" description="Cytoplasmic" evidence="2">
    <location>
        <begin position="86"/>
        <end position="98"/>
    </location>
</feature>
<feature type="transmembrane region" description="Helical" evidence="2">
    <location>
        <begin position="99"/>
        <end position="119"/>
    </location>
</feature>
<feature type="topological domain" description="Extracellular" evidence="2">
    <location>
        <begin position="120"/>
        <end position="134"/>
    </location>
</feature>
<feature type="transmembrane region" description="Helical" evidence="2">
    <location>
        <begin position="135"/>
        <end position="155"/>
    </location>
</feature>
<feature type="topological domain" description="Cytoplasmic" evidence="2">
    <location>
        <begin position="156"/>
        <end position="200"/>
    </location>
</feature>
<feature type="transmembrane region" description="Helical" evidence="2">
    <location>
        <begin position="201"/>
        <end position="221"/>
    </location>
</feature>
<feature type="topological domain" description="Extracellular" evidence="2">
    <location>
        <begin position="222"/>
        <end position="223"/>
    </location>
</feature>
<feature type="transmembrane region" description="Helical" evidence="2">
    <location>
        <begin position="224"/>
        <end position="244"/>
    </location>
</feature>
<feature type="topological domain" description="Cytoplasmic" evidence="2">
    <location>
        <begin position="245"/>
        <end position="460"/>
    </location>
</feature>
<feature type="region of interest" description="Disordered" evidence="3">
    <location>
        <begin position="371"/>
        <end position="390"/>
    </location>
</feature>
<feature type="sequence conflict" description="In Ref. 3; BAE29482 and 4; AAH68169." evidence="5" ref="3 4">
    <original>S</original>
    <variation>R</variation>
    <location>
        <position position="80"/>
    </location>
</feature>
<feature type="sequence conflict" description="In Ref. 1; AAM27917." evidence="5" ref="1">
    <original>Y</original>
    <variation>H</variation>
    <location>
        <position position="81"/>
    </location>
</feature>
<feature type="sequence conflict" description="In Ref. 1; AAM27917." evidence="5" ref="1">
    <original>E</original>
    <variation>G</variation>
    <location>
        <position position="128"/>
    </location>
</feature>
<feature type="sequence conflict" description="In Ref. 4; AAH05753." evidence="5" ref="4">
    <original>AYVSEAAS</original>
    <variation>GRVGGRVG</variation>
    <location>
        <begin position="161"/>
        <end position="168"/>
    </location>
</feature>
<feature type="sequence conflict" description="In Ref. 4; AAH68169." evidence="5" ref="4">
    <original>F</original>
    <variation>C</variation>
    <location>
        <position position="225"/>
    </location>
</feature>
<feature type="sequence conflict" description="In Ref. 1; AAM27917." evidence="5" ref="1">
    <original>F</original>
    <variation>L</variation>
    <location>
        <position position="292"/>
    </location>
</feature>
<feature type="sequence conflict" description="In Ref. 3; BAE29482 and 4; AAH68169." evidence="5" ref="3 4">
    <original>N</original>
    <variation>S</variation>
    <location>
        <position position="308"/>
    </location>
</feature>
<feature type="sequence conflict" description="In Ref. 2; AAL83717." evidence="5" ref="2">
    <original>A</original>
    <variation>T</variation>
    <location>
        <position position="314"/>
    </location>
</feature>
<feature type="sequence conflict" description="In Ref. 2; AAL83717." evidence="5" ref="2">
    <original>VST</original>
    <variation>ASS</variation>
    <location>
        <begin position="324"/>
        <end position="326"/>
    </location>
</feature>
<feature type="sequence conflict" description="In Ref. 2; AAL83717." evidence="5" ref="2">
    <original>I</original>
    <variation>N</variation>
    <location>
        <position position="331"/>
    </location>
</feature>
<accession>Q8BJM5</accession>
<accession>Q3UB35</accession>
<accession>Q6NVE0</accession>
<accession>Q8K4H6</accession>
<accession>Q8R4Z2</accession>
<accession>Q99JQ3</accession>
<proteinExistence type="evidence at protein level"/>
<keyword id="KW-0333">Golgi apparatus</keyword>
<keyword id="KW-0406">Ion transport</keyword>
<keyword id="KW-0472">Membrane</keyword>
<keyword id="KW-1185">Reference proteome</keyword>
<keyword id="KW-0812">Transmembrane</keyword>
<keyword id="KW-1133">Transmembrane helix</keyword>
<keyword id="KW-0813">Transport</keyword>
<keyword id="KW-0862">Zinc</keyword>
<keyword id="KW-0864">Zinc transport</keyword>
<comment type="function">
    <text evidence="1 6">Has probably no intrinsic transporter activity but together with SLC30A5 forms a functional zinc ion:proton antiporter heterodimer, mediating zinc entry into the lumen of organelles along the secretory pathway (Probable). As part of that zinc ion:proton antiporter, contributes to zinc ion homeostasis within the early secretory pathway and regulates the activation and folding of enzymes like alkaline phosphatases and enzymes involved in phosphatidylinositol glycan anchor biosynthesis (By similarity).</text>
</comment>
<comment type="subunit">
    <text evidence="1">Heterodimer with SLC30A5; form a functional zinc ion transmembrane transporter.</text>
</comment>
<comment type="subcellular location">
    <subcellularLocation>
        <location evidence="4">Golgi apparatus</location>
        <location evidence="4">trans-Golgi network membrane</location>
        <topology evidence="2">Multi-pass membrane protein</topology>
    </subcellularLocation>
</comment>
<comment type="tissue specificity">
    <text evidence="4">Expressed in brain and liver, and to a lower extent also in lung. Highly expressed in brain (at protein level).</text>
</comment>
<comment type="similarity">
    <text evidence="5">Belongs to the cation diffusion facilitator (CDF) transporter (TC 2.A.4) family. SLC30A subfamily.</text>
</comment>
<comment type="caution">
    <text evidence="1">Hydrophilic histidine residues that participate to zinc binding in transporters of the family are not conserved in SLC30A6.</text>
</comment>
<comment type="sequence caution" evidence="5">
    <conflict type="erroneous initiation">
        <sequence resource="EMBL-CDS" id="AAH05753"/>
    </conflict>
</comment>
<dbReference type="EMBL" id="AF395840">
    <property type="protein sequence ID" value="AAM27917.1"/>
    <property type="molecule type" value="mRNA"/>
</dbReference>
<dbReference type="EMBL" id="AF233346">
    <property type="protein sequence ID" value="AAL83717.1"/>
    <property type="molecule type" value="mRNA"/>
</dbReference>
<dbReference type="EMBL" id="AK082907">
    <property type="protein sequence ID" value="BAC38680.1"/>
    <property type="molecule type" value="mRNA"/>
</dbReference>
<dbReference type="EMBL" id="AK150342">
    <property type="protein sequence ID" value="BAE29482.1"/>
    <property type="molecule type" value="mRNA"/>
</dbReference>
<dbReference type="EMBL" id="AK151120">
    <property type="protein sequence ID" value="BAE30129.1"/>
    <property type="molecule type" value="mRNA"/>
</dbReference>
<dbReference type="EMBL" id="BC005753">
    <property type="protein sequence ID" value="AAH05753.1"/>
    <property type="status" value="ALT_INIT"/>
    <property type="molecule type" value="mRNA"/>
</dbReference>
<dbReference type="EMBL" id="BC066162">
    <property type="protein sequence ID" value="AAH66162.1"/>
    <property type="molecule type" value="mRNA"/>
</dbReference>
<dbReference type="EMBL" id="BC068169">
    <property type="protein sequence ID" value="AAH68169.1"/>
    <property type="molecule type" value="mRNA"/>
</dbReference>
<dbReference type="CCDS" id="CCDS37691.1"/>
<dbReference type="RefSeq" id="NP_659047.2">
    <property type="nucleotide sequence ID" value="NM_144798.6"/>
</dbReference>
<dbReference type="SMR" id="Q8BJM5"/>
<dbReference type="BioGRID" id="229137">
    <property type="interactions" value="2"/>
</dbReference>
<dbReference type="FunCoup" id="Q8BJM5">
    <property type="interactions" value="2751"/>
</dbReference>
<dbReference type="STRING" id="10090.ENSMUSP00000136503"/>
<dbReference type="GlyGen" id="Q8BJM5">
    <property type="glycosylation" value="4 sites, 1 O-linked glycan (3 sites)"/>
</dbReference>
<dbReference type="iPTMnet" id="Q8BJM5"/>
<dbReference type="PhosphoSitePlus" id="Q8BJM5"/>
<dbReference type="SwissPalm" id="Q8BJM5"/>
<dbReference type="PaxDb" id="10090-ENSMUSP00000136503"/>
<dbReference type="ProteomicsDB" id="275310"/>
<dbReference type="Pumba" id="Q8BJM5"/>
<dbReference type="Antibodypedia" id="29149">
    <property type="antibodies" value="159 antibodies from 23 providers"/>
</dbReference>
<dbReference type="DNASU" id="210148"/>
<dbReference type="Ensembl" id="ENSMUST00000024870.9">
    <property type="protein sequence ID" value="ENSMUSP00000024870.7"/>
    <property type="gene ID" value="ENSMUSG00000024069.15"/>
</dbReference>
<dbReference type="GeneID" id="210148"/>
<dbReference type="KEGG" id="mmu:210148"/>
<dbReference type="UCSC" id="uc008dob.2">
    <property type="organism name" value="mouse"/>
</dbReference>
<dbReference type="AGR" id="MGI:2386741"/>
<dbReference type="CTD" id="55676"/>
<dbReference type="MGI" id="MGI:2386741">
    <property type="gene designation" value="Slc30a6"/>
</dbReference>
<dbReference type="VEuPathDB" id="HostDB:ENSMUSG00000024069"/>
<dbReference type="eggNOG" id="KOG1484">
    <property type="taxonomic scope" value="Eukaryota"/>
</dbReference>
<dbReference type="GeneTree" id="ENSGT00940000159934"/>
<dbReference type="InParanoid" id="Q8BJM5"/>
<dbReference type="OMA" id="NIVCTGF"/>
<dbReference type="OrthoDB" id="5382797at2759"/>
<dbReference type="PhylomeDB" id="Q8BJM5"/>
<dbReference type="BioGRID-ORCS" id="210148">
    <property type="hits" value="3 hits in 76 CRISPR screens"/>
</dbReference>
<dbReference type="ChiTaRS" id="Slc30a6">
    <property type="organism name" value="mouse"/>
</dbReference>
<dbReference type="PRO" id="PR:Q8BJM5"/>
<dbReference type="Proteomes" id="UP000000589">
    <property type="component" value="Chromosome 17"/>
</dbReference>
<dbReference type="RNAct" id="Q8BJM5">
    <property type="molecule type" value="protein"/>
</dbReference>
<dbReference type="Bgee" id="ENSMUSG00000024069">
    <property type="expression patterns" value="Expressed in interventricular septum and 252 other cell types or tissues"/>
</dbReference>
<dbReference type="ExpressionAtlas" id="Q8BJM5">
    <property type="expression patterns" value="baseline and differential"/>
</dbReference>
<dbReference type="GO" id="GO:0005829">
    <property type="term" value="C:cytosol"/>
    <property type="evidence" value="ECO:0007669"/>
    <property type="project" value="GOC"/>
</dbReference>
<dbReference type="GO" id="GO:0005739">
    <property type="term" value="C:mitochondrion"/>
    <property type="evidence" value="ECO:0007005"/>
    <property type="project" value="MGI"/>
</dbReference>
<dbReference type="GO" id="GO:0032588">
    <property type="term" value="C:trans-Golgi network membrane"/>
    <property type="evidence" value="ECO:0000250"/>
    <property type="project" value="UniProtKB"/>
</dbReference>
<dbReference type="GO" id="GO:0005385">
    <property type="term" value="F:zinc ion transmembrane transporter activity"/>
    <property type="evidence" value="ECO:0000314"/>
    <property type="project" value="MGI"/>
</dbReference>
<dbReference type="GO" id="GO:0006895">
    <property type="term" value="P:Golgi to endosome transport"/>
    <property type="evidence" value="ECO:0000314"/>
    <property type="project" value="MGI"/>
</dbReference>
<dbReference type="GO" id="GO:1904257">
    <property type="term" value="P:zinc ion import into Golgi lumen"/>
    <property type="evidence" value="ECO:0000250"/>
    <property type="project" value="UniProtKB"/>
</dbReference>
<dbReference type="GO" id="GO:0006829">
    <property type="term" value="P:zinc ion transport"/>
    <property type="evidence" value="ECO:0000314"/>
    <property type="project" value="MGI"/>
</dbReference>
<dbReference type="FunFam" id="1.20.1510.10:FF:000009">
    <property type="entry name" value="zinc transporter 6 isoform X1"/>
    <property type="match status" value="1"/>
</dbReference>
<dbReference type="Gene3D" id="1.20.1510.10">
    <property type="entry name" value="Cation efflux protein transmembrane domain"/>
    <property type="match status" value="1"/>
</dbReference>
<dbReference type="InterPro" id="IPR002524">
    <property type="entry name" value="Cation_efflux"/>
</dbReference>
<dbReference type="InterPro" id="IPR027469">
    <property type="entry name" value="Cation_efflux_TMD_sf"/>
</dbReference>
<dbReference type="InterPro" id="IPR052005">
    <property type="entry name" value="CDF_SLC30A"/>
</dbReference>
<dbReference type="NCBIfam" id="TIGR01297">
    <property type="entry name" value="CDF"/>
    <property type="match status" value="1"/>
</dbReference>
<dbReference type="PANTHER" id="PTHR46531">
    <property type="entry name" value="ZINC TRANSPORTER 6"/>
    <property type="match status" value="1"/>
</dbReference>
<dbReference type="PANTHER" id="PTHR46531:SF1">
    <property type="entry name" value="ZINC TRANSPORTER 6"/>
    <property type="match status" value="1"/>
</dbReference>
<dbReference type="Pfam" id="PF01545">
    <property type="entry name" value="Cation_efflux"/>
    <property type="match status" value="1"/>
</dbReference>
<dbReference type="SUPFAM" id="SSF161111">
    <property type="entry name" value="Cation efflux protein transmembrane domain-like"/>
    <property type="match status" value="1"/>
</dbReference>
<reference key="1">
    <citation type="journal article" date="2002" name="J. Biol. Chem.">
        <title>Functional characterization of a novel mammalian zinc transporter, ZnT6.</title>
        <authorList>
            <person name="Huang L."/>
            <person name="Kirschke C.P."/>
            <person name="Gitschier J."/>
        </authorList>
    </citation>
    <scope>NUCLEOTIDE SEQUENCE [MRNA]</scope>
    <scope>FUNCTION</scope>
    <scope>SUBCELLULAR LOCATION</scope>
    <scope>TISSUE SPECIFICITY</scope>
    <source>
        <strain>C57BL/6J</strain>
    </source>
</reference>
<reference key="2">
    <citation type="submission" date="2000-02" db="EMBL/GenBank/DDBJ databases">
        <title>Cloning of new mammalian zinc transporter-like genes.</title>
        <authorList>
            <person name="Zhu W."/>
            <person name="Mager S."/>
        </authorList>
    </citation>
    <scope>NUCLEOTIDE SEQUENCE [MRNA]</scope>
    <source>
        <tissue>Kidney</tissue>
    </source>
</reference>
<reference key="3">
    <citation type="journal article" date="2005" name="Science">
        <title>The transcriptional landscape of the mammalian genome.</title>
        <authorList>
            <person name="Carninci P."/>
            <person name="Kasukawa T."/>
            <person name="Katayama S."/>
            <person name="Gough J."/>
            <person name="Frith M.C."/>
            <person name="Maeda N."/>
            <person name="Oyama R."/>
            <person name="Ravasi T."/>
            <person name="Lenhard B."/>
            <person name="Wells C."/>
            <person name="Kodzius R."/>
            <person name="Shimokawa K."/>
            <person name="Bajic V.B."/>
            <person name="Brenner S.E."/>
            <person name="Batalov S."/>
            <person name="Forrest A.R."/>
            <person name="Zavolan M."/>
            <person name="Davis M.J."/>
            <person name="Wilming L.G."/>
            <person name="Aidinis V."/>
            <person name="Allen J.E."/>
            <person name="Ambesi-Impiombato A."/>
            <person name="Apweiler R."/>
            <person name="Aturaliya R.N."/>
            <person name="Bailey T.L."/>
            <person name="Bansal M."/>
            <person name="Baxter L."/>
            <person name="Beisel K.W."/>
            <person name="Bersano T."/>
            <person name="Bono H."/>
            <person name="Chalk A.M."/>
            <person name="Chiu K.P."/>
            <person name="Choudhary V."/>
            <person name="Christoffels A."/>
            <person name="Clutterbuck D.R."/>
            <person name="Crowe M.L."/>
            <person name="Dalla E."/>
            <person name="Dalrymple B.P."/>
            <person name="de Bono B."/>
            <person name="Della Gatta G."/>
            <person name="di Bernardo D."/>
            <person name="Down T."/>
            <person name="Engstrom P."/>
            <person name="Fagiolini M."/>
            <person name="Faulkner G."/>
            <person name="Fletcher C.F."/>
            <person name="Fukushima T."/>
            <person name="Furuno M."/>
            <person name="Futaki S."/>
            <person name="Gariboldi M."/>
            <person name="Georgii-Hemming P."/>
            <person name="Gingeras T.R."/>
            <person name="Gojobori T."/>
            <person name="Green R.E."/>
            <person name="Gustincich S."/>
            <person name="Harbers M."/>
            <person name="Hayashi Y."/>
            <person name="Hensch T.K."/>
            <person name="Hirokawa N."/>
            <person name="Hill D."/>
            <person name="Huminiecki L."/>
            <person name="Iacono M."/>
            <person name="Ikeo K."/>
            <person name="Iwama A."/>
            <person name="Ishikawa T."/>
            <person name="Jakt M."/>
            <person name="Kanapin A."/>
            <person name="Katoh M."/>
            <person name="Kawasawa Y."/>
            <person name="Kelso J."/>
            <person name="Kitamura H."/>
            <person name="Kitano H."/>
            <person name="Kollias G."/>
            <person name="Krishnan S.P."/>
            <person name="Kruger A."/>
            <person name="Kummerfeld S.K."/>
            <person name="Kurochkin I.V."/>
            <person name="Lareau L.F."/>
            <person name="Lazarevic D."/>
            <person name="Lipovich L."/>
            <person name="Liu J."/>
            <person name="Liuni S."/>
            <person name="McWilliam S."/>
            <person name="Madan Babu M."/>
            <person name="Madera M."/>
            <person name="Marchionni L."/>
            <person name="Matsuda H."/>
            <person name="Matsuzawa S."/>
            <person name="Miki H."/>
            <person name="Mignone F."/>
            <person name="Miyake S."/>
            <person name="Morris K."/>
            <person name="Mottagui-Tabar S."/>
            <person name="Mulder N."/>
            <person name="Nakano N."/>
            <person name="Nakauchi H."/>
            <person name="Ng P."/>
            <person name="Nilsson R."/>
            <person name="Nishiguchi S."/>
            <person name="Nishikawa S."/>
            <person name="Nori F."/>
            <person name="Ohara O."/>
            <person name="Okazaki Y."/>
            <person name="Orlando V."/>
            <person name="Pang K.C."/>
            <person name="Pavan W.J."/>
            <person name="Pavesi G."/>
            <person name="Pesole G."/>
            <person name="Petrovsky N."/>
            <person name="Piazza S."/>
            <person name="Reed J."/>
            <person name="Reid J.F."/>
            <person name="Ring B.Z."/>
            <person name="Ringwald M."/>
            <person name="Rost B."/>
            <person name="Ruan Y."/>
            <person name="Salzberg S.L."/>
            <person name="Sandelin A."/>
            <person name="Schneider C."/>
            <person name="Schoenbach C."/>
            <person name="Sekiguchi K."/>
            <person name="Semple C.A."/>
            <person name="Seno S."/>
            <person name="Sessa L."/>
            <person name="Sheng Y."/>
            <person name="Shibata Y."/>
            <person name="Shimada H."/>
            <person name="Shimada K."/>
            <person name="Silva D."/>
            <person name="Sinclair B."/>
            <person name="Sperling S."/>
            <person name="Stupka E."/>
            <person name="Sugiura K."/>
            <person name="Sultana R."/>
            <person name="Takenaka Y."/>
            <person name="Taki K."/>
            <person name="Tammoja K."/>
            <person name="Tan S.L."/>
            <person name="Tang S."/>
            <person name="Taylor M.S."/>
            <person name="Tegner J."/>
            <person name="Teichmann S.A."/>
            <person name="Ueda H.R."/>
            <person name="van Nimwegen E."/>
            <person name="Verardo R."/>
            <person name="Wei C.L."/>
            <person name="Yagi K."/>
            <person name="Yamanishi H."/>
            <person name="Zabarovsky E."/>
            <person name="Zhu S."/>
            <person name="Zimmer A."/>
            <person name="Hide W."/>
            <person name="Bult C."/>
            <person name="Grimmond S.M."/>
            <person name="Teasdale R.D."/>
            <person name="Liu E.T."/>
            <person name="Brusic V."/>
            <person name="Quackenbush J."/>
            <person name="Wahlestedt C."/>
            <person name="Mattick J.S."/>
            <person name="Hume D.A."/>
            <person name="Kai C."/>
            <person name="Sasaki D."/>
            <person name="Tomaru Y."/>
            <person name="Fukuda S."/>
            <person name="Kanamori-Katayama M."/>
            <person name="Suzuki M."/>
            <person name="Aoki J."/>
            <person name="Arakawa T."/>
            <person name="Iida J."/>
            <person name="Imamura K."/>
            <person name="Itoh M."/>
            <person name="Kato T."/>
            <person name="Kawaji H."/>
            <person name="Kawagashira N."/>
            <person name="Kawashima T."/>
            <person name="Kojima M."/>
            <person name="Kondo S."/>
            <person name="Konno H."/>
            <person name="Nakano K."/>
            <person name="Ninomiya N."/>
            <person name="Nishio T."/>
            <person name="Okada M."/>
            <person name="Plessy C."/>
            <person name="Shibata K."/>
            <person name="Shiraki T."/>
            <person name="Suzuki S."/>
            <person name="Tagami M."/>
            <person name="Waki K."/>
            <person name="Watahiki A."/>
            <person name="Okamura-Oho Y."/>
            <person name="Suzuki H."/>
            <person name="Kawai J."/>
            <person name="Hayashizaki Y."/>
        </authorList>
    </citation>
    <scope>NUCLEOTIDE SEQUENCE [LARGE SCALE MRNA]</scope>
    <source>
        <strain>C57BL/6J</strain>
        <tissue>Bone marrow</tissue>
    </source>
</reference>
<reference key="4">
    <citation type="journal article" date="2004" name="Genome Res.">
        <title>The status, quality, and expansion of the NIH full-length cDNA project: the Mammalian Gene Collection (MGC).</title>
        <authorList>
            <consortium name="The MGC Project Team"/>
        </authorList>
    </citation>
    <scope>NUCLEOTIDE SEQUENCE [LARGE SCALE MRNA]</scope>
    <source>
        <strain>C57BL/6J</strain>
        <strain>FVB/N</strain>
        <tissue>Eye</tissue>
        <tissue>Kidney</tissue>
        <tissue>Mammary tumor</tissue>
    </source>
</reference>
<reference key="5">
    <citation type="journal article" date="2009" name="Immunity">
        <title>The phagosomal proteome in interferon-gamma-activated macrophages.</title>
        <authorList>
            <person name="Trost M."/>
            <person name="English L."/>
            <person name="Lemieux S."/>
            <person name="Courcelles M."/>
            <person name="Desjardins M."/>
            <person name="Thibault P."/>
        </authorList>
    </citation>
    <scope>IDENTIFICATION BY MASS SPECTROMETRY [LARGE SCALE ANALYSIS]</scope>
</reference>
<reference key="6">
    <citation type="journal article" date="2010" name="Cell">
        <title>A tissue-specific atlas of mouse protein phosphorylation and expression.</title>
        <authorList>
            <person name="Huttlin E.L."/>
            <person name="Jedrychowski M.P."/>
            <person name="Elias J.E."/>
            <person name="Goswami T."/>
            <person name="Rad R."/>
            <person name="Beausoleil S.A."/>
            <person name="Villen J."/>
            <person name="Haas W."/>
            <person name="Sowa M.E."/>
            <person name="Gygi S.P."/>
        </authorList>
    </citation>
    <scope>IDENTIFICATION BY MASS SPECTROMETRY [LARGE SCALE ANALYSIS]</scope>
    <source>
        <tissue>Spleen</tissue>
    </source>
</reference>
<sequence length="460" mass="51027">MGTIHLFRKPQRSFFGKLLQEFRLVAADRRSWKILLFGAINVLCTGFLLMWCSSTNSIALTAYTYLTIFDLFSLITCLISYWVMMRKPSPVYSFGFERLEVLAVFASTVLAQLGALFILKESAERFLEQPEIHTGRLLVGTFVALSFNLFTMLSIRNKPFAYVSEAASTSWLQEHVADLSRSLCGLIPGLSSIFLPRMNPFVLIDLAGAFALCITYMLIEINNYFAVDTASAIAIALMTFGTMYPMSVYSGKVLLQTTPPHVIGQLDKLIREVSTLDGVLEVRNEHFWTLGFGSLAGSVHVRIRRDANEQMVLAHVSNRLCTLVSTLTVQIFKDDWIRPALSSGPVAPNVLNFSDHHVIPMPLLKNVDERTPVTSTPAKPSSPPPEFSFNTPGKNVSPVILLNTQTRPYSLGLNRGHTPYSSVFSQGLAFPGVGAGQGLRPTFPHIPSRYGINRMGQPRP</sequence>